<reference key="1">
    <citation type="journal article" date="1993" name="Plant Mol. Biol.">
        <title>Genes of the R-phycocyanin II locus of marine Synechococcus spp., and comparison of protein-chromophore interactions in phycocyanins differing in bilin composition.</title>
        <authorList>
            <person name="de Lorimier R."/>
            <person name="Wilbanks S.M."/>
            <person name="Glazer A.N."/>
        </authorList>
    </citation>
    <scope>NUCLEOTIDE SEQUENCE [GENOMIC DNA]</scope>
</reference>
<reference key="2">
    <citation type="journal article" date="1993" name="J. Biol. Chem.">
        <title>Rod structure of a phycoerythrin II-containing phycobilisome. I. Organization and sequence of the gene cluster encoding the major phycobiliprotein rod components in the genome of marine Synechococcus sp. WH8020.</title>
        <authorList>
            <person name="Wilbanks S.M."/>
            <person name="Glazer A.N."/>
        </authorList>
    </citation>
    <scope>NUCLEOTIDE SEQUENCE [GENOMIC DNA]</scope>
</reference>
<feature type="chain" id="PRO_0000199296" description="Uncharacterized 16.1 kDa protein in cpeY 3'region">
    <location>
        <begin position="1"/>
        <end position="140"/>
    </location>
</feature>
<organism>
    <name type="scientific">Synechococcus sp. (strain WH8020)</name>
    <dbReference type="NCBI Taxonomy" id="32052"/>
    <lineage>
        <taxon>Bacteria</taxon>
        <taxon>Bacillati</taxon>
        <taxon>Cyanobacteriota</taxon>
        <taxon>Cyanophyceae</taxon>
        <taxon>Synechococcales</taxon>
        <taxon>Synechococcaceae</taxon>
        <taxon>Synechococcus</taxon>
    </lineage>
</organism>
<protein>
    <recommendedName>
        <fullName>Uncharacterized 16.1 kDa protein in cpeY 3'region</fullName>
    </recommendedName>
    <alternativeName>
        <fullName>ORF140</fullName>
    </alternativeName>
</protein>
<keyword id="KW-0042">Antenna complex</keyword>
<keyword id="KW-0605">Phycobilisome</keyword>
<sequence>MQFFVLSHNLQIHSESVPSFTPSELAEGLSLHSDHINTNALNHPHWMVLVESDLSHQELAREVVNAWKKFRNSLGHSMNHSFIALGGRKDSKATPGSPLQEGYWGVDVVECANPDSFLKSINWDALKASRPVDGVFEVRD</sequence>
<proteinExistence type="predicted"/>
<accession>Q02186</accession>
<dbReference type="EMBL" id="M95288">
    <property type="protein sequence ID" value="AAA27338.1"/>
    <property type="molecule type" value="Genomic_DNA"/>
</dbReference>
<dbReference type="PIR" id="E45045">
    <property type="entry name" value="E45045"/>
</dbReference>
<dbReference type="GO" id="GO:0030089">
    <property type="term" value="C:phycobilisome"/>
    <property type="evidence" value="ECO:0007669"/>
    <property type="project" value="UniProtKB-KW"/>
</dbReference>
<dbReference type="InterPro" id="IPR020325">
    <property type="entry name" value="Uncharacterised_16.1kDa"/>
</dbReference>
<dbReference type="Pfam" id="PF10847">
    <property type="entry name" value="DUF2656"/>
    <property type="match status" value="1"/>
</dbReference>
<name>YCP4_SYNPY</name>